<protein>
    <recommendedName>
        <fullName evidence="1">Small ribosomal subunit protein bS16</fullName>
    </recommendedName>
    <alternativeName>
        <fullName evidence="2">30S ribosomal protein S16</fullName>
    </alternativeName>
</protein>
<comment type="similarity">
    <text evidence="1">Belongs to the bacterial ribosomal protein bS16 family.</text>
</comment>
<reference key="1">
    <citation type="journal article" date="2009" name="Proc. Natl. Acad. Sci. U.S.A.">
        <title>The mosaic genome structure of the Wolbachia wRi strain infecting Drosophila simulans.</title>
        <authorList>
            <person name="Klasson L."/>
            <person name="Westberg J."/>
            <person name="Sapountzis P."/>
            <person name="Naeslund K."/>
            <person name="Lutnaes Y."/>
            <person name="Darby A.C."/>
            <person name="Veneti Z."/>
            <person name="Chen L."/>
            <person name="Braig H.R."/>
            <person name="Garrett R."/>
            <person name="Bourtzis K."/>
            <person name="Andersson S.G."/>
        </authorList>
    </citation>
    <scope>NUCLEOTIDE SEQUENCE [LARGE SCALE GENOMIC DNA]</scope>
    <source>
        <strain>wRi</strain>
    </source>
</reference>
<feature type="chain" id="PRO_1000134336" description="Small ribosomal subunit protein bS16">
    <location>
        <begin position="1"/>
        <end position="106"/>
    </location>
</feature>
<dbReference type="EMBL" id="CP001391">
    <property type="protein sequence ID" value="ACN95515.1"/>
    <property type="molecule type" value="Genomic_DNA"/>
</dbReference>
<dbReference type="RefSeq" id="WP_006279266.1">
    <property type="nucleotide sequence ID" value="NZ_MKIF01000038.1"/>
</dbReference>
<dbReference type="SMR" id="C0R3M3"/>
<dbReference type="STRING" id="66084.WRi_007670"/>
<dbReference type="GeneID" id="70036277"/>
<dbReference type="KEGG" id="wri:WRi_007670"/>
<dbReference type="HOGENOM" id="CLU_100590_3_1_5"/>
<dbReference type="Proteomes" id="UP000001293">
    <property type="component" value="Chromosome"/>
</dbReference>
<dbReference type="GO" id="GO:0005737">
    <property type="term" value="C:cytoplasm"/>
    <property type="evidence" value="ECO:0007669"/>
    <property type="project" value="UniProtKB-ARBA"/>
</dbReference>
<dbReference type="GO" id="GO:0015935">
    <property type="term" value="C:small ribosomal subunit"/>
    <property type="evidence" value="ECO:0007669"/>
    <property type="project" value="TreeGrafter"/>
</dbReference>
<dbReference type="GO" id="GO:0003735">
    <property type="term" value="F:structural constituent of ribosome"/>
    <property type="evidence" value="ECO:0007669"/>
    <property type="project" value="InterPro"/>
</dbReference>
<dbReference type="GO" id="GO:0006412">
    <property type="term" value="P:translation"/>
    <property type="evidence" value="ECO:0007669"/>
    <property type="project" value="UniProtKB-UniRule"/>
</dbReference>
<dbReference type="Gene3D" id="3.30.1320.10">
    <property type="match status" value="1"/>
</dbReference>
<dbReference type="HAMAP" id="MF_00385">
    <property type="entry name" value="Ribosomal_bS16"/>
    <property type="match status" value="1"/>
</dbReference>
<dbReference type="InterPro" id="IPR000307">
    <property type="entry name" value="Ribosomal_bS16"/>
</dbReference>
<dbReference type="InterPro" id="IPR020592">
    <property type="entry name" value="Ribosomal_bS16_CS"/>
</dbReference>
<dbReference type="InterPro" id="IPR023803">
    <property type="entry name" value="Ribosomal_bS16_dom_sf"/>
</dbReference>
<dbReference type="NCBIfam" id="TIGR00002">
    <property type="entry name" value="S16"/>
    <property type="match status" value="1"/>
</dbReference>
<dbReference type="PANTHER" id="PTHR12919">
    <property type="entry name" value="30S RIBOSOMAL PROTEIN S16"/>
    <property type="match status" value="1"/>
</dbReference>
<dbReference type="PANTHER" id="PTHR12919:SF20">
    <property type="entry name" value="SMALL RIBOSOMAL SUBUNIT PROTEIN BS16M"/>
    <property type="match status" value="1"/>
</dbReference>
<dbReference type="Pfam" id="PF00886">
    <property type="entry name" value="Ribosomal_S16"/>
    <property type="match status" value="1"/>
</dbReference>
<dbReference type="SUPFAM" id="SSF54565">
    <property type="entry name" value="Ribosomal protein S16"/>
    <property type="match status" value="1"/>
</dbReference>
<dbReference type="PROSITE" id="PS00732">
    <property type="entry name" value="RIBOSOMAL_S16"/>
    <property type="match status" value="1"/>
</dbReference>
<proteinExistence type="inferred from homology"/>
<keyword id="KW-0687">Ribonucleoprotein</keyword>
<keyword id="KW-0689">Ribosomal protein</keyword>
<organism>
    <name type="scientific">Wolbachia sp. subsp. Drosophila simulans (strain wRi)</name>
    <dbReference type="NCBI Taxonomy" id="66084"/>
    <lineage>
        <taxon>Bacteria</taxon>
        <taxon>Pseudomonadati</taxon>
        <taxon>Pseudomonadota</taxon>
        <taxon>Alphaproteobacteria</taxon>
        <taxon>Rickettsiales</taxon>
        <taxon>Anaplasmataceae</taxon>
        <taxon>Wolbachieae</taxon>
        <taxon>Wolbachia</taxon>
    </lineage>
</organism>
<accession>C0R3M3</accession>
<sequence>MAVKIRLARFGAKKRPFYRIVVADSRAPRDGRFIEKIGQYDPMLPKDNKNRVVVKADRLKHWLSVGAQATERVLWFIKKGIVTLETEPKKTEKKKVENEKAQGQEA</sequence>
<evidence type="ECO:0000255" key="1">
    <source>
        <dbReference type="HAMAP-Rule" id="MF_00385"/>
    </source>
</evidence>
<evidence type="ECO:0000305" key="2"/>
<gene>
    <name evidence="1" type="primary">rpsP</name>
    <name type="ordered locus">WRi_007670</name>
</gene>
<name>RS16_WOLWR</name>